<gene>
    <name type="ordered locus">BLi00869/BLi00870</name>
    <name type="ordered locus">BL03027</name>
</gene>
<proteinExistence type="uncertain"/>
<keyword id="KW-0963">Cytoplasm</keyword>
<keyword id="KW-0378">Hydrolase</keyword>
<keyword id="KW-0479">Metal-binding</keyword>
<keyword id="KW-1185">Reference proteome</keyword>
<keyword id="KW-0862">Zinc</keyword>
<dbReference type="EC" id="3.-.-.-" evidence="1"/>
<dbReference type="EMBL" id="AE017333">
    <property type="status" value="NOT_ANNOTATED_CDS"/>
    <property type="molecule type" value="Genomic_DNA"/>
</dbReference>
<dbReference type="EMBL" id="CP000002">
    <property type="status" value="NOT_ANNOTATED_CDS"/>
    <property type="molecule type" value="Genomic_DNA"/>
</dbReference>
<dbReference type="Proteomes" id="UP000000606">
    <property type="component" value="Chromosome"/>
</dbReference>
<dbReference type="GO" id="GO:0005737">
    <property type="term" value="C:cytoplasm"/>
    <property type="evidence" value="ECO:0007669"/>
    <property type="project" value="UniProtKB-SubCell"/>
</dbReference>
<dbReference type="GO" id="GO:0016787">
    <property type="term" value="F:hydrolase activity"/>
    <property type="evidence" value="ECO:0007669"/>
    <property type="project" value="UniProtKB-UniRule"/>
</dbReference>
<dbReference type="GO" id="GO:0008270">
    <property type="term" value="F:zinc ion binding"/>
    <property type="evidence" value="ECO:0007669"/>
    <property type="project" value="UniProtKB-UniRule"/>
</dbReference>
<dbReference type="Gene3D" id="1.20.120.450">
    <property type="entry name" value="dinb family like domain"/>
    <property type="match status" value="1"/>
</dbReference>
<dbReference type="HAMAP" id="MF_01256">
    <property type="entry name" value="YfiT_hydrol"/>
    <property type="match status" value="1"/>
</dbReference>
<dbReference type="InterPro" id="IPR024775">
    <property type="entry name" value="DinB-like"/>
</dbReference>
<dbReference type="InterPro" id="IPR034660">
    <property type="entry name" value="DinB/YfiT-like"/>
</dbReference>
<dbReference type="InterPro" id="IPR023774">
    <property type="entry name" value="Put_metal_dep_hydrolase_YfiT"/>
</dbReference>
<dbReference type="NCBIfam" id="NF009807">
    <property type="entry name" value="PRK13291.1"/>
    <property type="match status" value="1"/>
</dbReference>
<dbReference type="Pfam" id="PF12867">
    <property type="entry name" value="DinB_2"/>
    <property type="match status" value="1"/>
</dbReference>
<dbReference type="SUPFAM" id="SSF109854">
    <property type="entry name" value="DinB/YfiT-like putative metalloenzymes"/>
    <property type="match status" value="1"/>
</dbReference>
<accession>Q65MB1</accession>
<accession>Q62XQ4</accession>
<accession>Q65MB0</accession>
<protein>
    <recommendedName>
        <fullName evidence="1">Putative metal-dependent hydrolase BLi00869/BLi00870/BL03027</fullName>
        <ecNumber evidence="1">3.-.-.-</ecNumber>
    </recommendedName>
</protein>
<name>Y869_BACLD</name>
<feature type="chain" id="PRO_0000162372" description="Putative metal-dependent hydrolase BLi00869/BLi00870/BL03027">
    <location>
        <begin position="1"/>
        <end position="176"/>
    </location>
</feature>
<feature type="binding site" evidence="1">
    <location>
        <position position="65"/>
    </location>
    <ligand>
        <name>Zn(2+)</name>
        <dbReference type="ChEBI" id="CHEBI:29105"/>
    </ligand>
</feature>
<feature type="binding site" evidence="1">
    <location>
        <position position="158"/>
    </location>
    <ligand>
        <name>Zn(2+)</name>
        <dbReference type="ChEBI" id="CHEBI:29105"/>
    </ligand>
</feature>
<feature type="binding site" evidence="1">
    <location>
        <position position="162"/>
    </location>
    <ligand>
        <name>Zn(2+)</name>
        <dbReference type="ChEBI" id="CHEBI:29105"/>
    </ligand>
</feature>
<organism>
    <name type="scientific">Bacillus licheniformis (strain ATCC 14580 / DSM 13 / JCM 2505 / CCUG 7422 / NBRC 12200 / NCIMB 9375 / NCTC 10341 / NRRL NRS-1264 / Gibson 46)</name>
    <dbReference type="NCBI Taxonomy" id="279010"/>
    <lineage>
        <taxon>Bacteria</taxon>
        <taxon>Bacillati</taxon>
        <taxon>Bacillota</taxon>
        <taxon>Bacilli</taxon>
        <taxon>Bacillales</taxon>
        <taxon>Bacillaceae</taxon>
        <taxon>Bacillus</taxon>
    </lineage>
</organism>
<comment type="function">
    <text evidence="1">Possible metal-dependent hydrolase.</text>
</comment>
<comment type="cofactor">
    <cofactor evidence="1">
        <name>Zn(2+)</name>
        <dbReference type="ChEBI" id="CHEBI:29105"/>
    </cofactor>
    <text evidence="1">Binds 1 zinc ion per subunit.</text>
</comment>
<comment type="subunit">
    <text evidence="1">Homodimer.</text>
</comment>
<comment type="subcellular location">
    <subcellularLocation>
        <location evidence="1">Cytoplasm</location>
    </subcellularLocation>
</comment>
<comment type="similarity">
    <text evidence="1">Belongs to the metal hydrolase YfiT family.</text>
</comment>
<comment type="caution">
    <text evidence="2">Could be the product of a pseudogene. Resulting from truncation by frameshift mutation.</text>
</comment>
<comment type="sequence caution" evidence="2">
    <conflict type="frameshift">
        <sequence resource="EMBL" id="AE017333"/>
    </conflict>
    <text>Produces two separate ORFs.</text>
</comment>
<comment type="sequence caution" evidence="2">
    <conflict type="frameshift">
        <sequence resource="EMBL" id="CP000002"/>
    </conflict>
    <text>Produces two separate ORFs.</text>
</comment>
<sequence>MDQLKYPIGTFSKPLEADERELEKWIGDLKQAPHLLRSAAAELNEEQLDTPYRTGGWAVRQVVHHLADSHMNGYIRSKLALTEETPLIRTFDEQNWAGLTDARTLDPDLSLALLDTLHLRWAALXESLTEADFEKAYIYPGTGEEMKLYQALALYVWHSQHHIAHIKAHRKRMGWN</sequence>
<evidence type="ECO:0000255" key="1">
    <source>
        <dbReference type="HAMAP-Rule" id="MF_01256"/>
    </source>
</evidence>
<evidence type="ECO:0000305" key="2"/>
<reference key="1">
    <citation type="journal article" date="2004" name="J. Mol. Microbiol. Biotechnol.">
        <title>The complete genome sequence of Bacillus licheniformis DSM13, an organism with great industrial potential.</title>
        <authorList>
            <person name="Veith B."/>
            <person name="Herzberg C."/>
            <person name="Steckel S."/>
            <person name="Feesche J."/>
            <person name="Maurer K.H."/>
            <person name="Ehrenreich P."/>
            <person name="Baeumer S."/>
            <person name="Henne A."/>
            <person name="Liesegang H."/>
            <person name="Merkl R."/>
            <person name="Ehrenreich A."/>
            <person name="Gottschalk G."/>
        </authorList>
    </citation>
    <scope>NUCLEOTIDE SEQUENCE [LARGE SCALE GENOMIC DNA]</scope>
    <source>
        <strain>ATCC 14580 / DSM 13 / JCM 2505 / CCUG 7422 / NBRC 12200 / NCIMB 9375 / NCTC 10341 / NRRL NRS-1264 / Gibson 46</strain>
    </source>
</reference>
<reference key="2">
    <citation type="journal article" date="2004" name="Genome Biol.">
        <title>Complete genome sequence of the industrial bacterium Bacillus licheniformis and comparisons with closely related Bacillus species.</title>
        <authorList>
            <person name="Rey M.W."/>
            <person name="Ramaiya P."/>
            <person name="Nelson B.A."/>
            <person name="Brody-Karpin S.D."/>
            <person name="Zaretsky E.J."/>
            <person name="Tang M."/>
            <person name="Lopez de Leon A."/>
            <person name="Xiang H."/>
            <person name="Gusti V."/>
            <person name="Clausen I.G."/>
            <person name="Olsen P.B."/>
            <person name="Rasmussen M.D."/>
            <person name="Andersen J.T."/>
            <person name="Joergensen P.L."/>
            <person name="Larsen T.S."/>
            <person name="Sorokin A."/>
            <person name="Bolotin A."/>
            <person name="Lapidus A."/>
            <person name="Galleron N."/>
            <person name="Ehrlich S.D."/>
            <person name="Berka R.M."/>
        </authorList>
    </citation>
    <scope>NUCLEOTIDE SEQUENCE [LARGE SCALE GENOMIC DNA]</scope>
    <source>
        <strain>ATCC 14580 / DSM 13 / JCM 2505 / CCUG 7422 / NBRC 12200 / NCIMB 9375 / NCTC 10341 / NRRL NRS-1264 / Gibson 46</strain>
    </source>
</reference>